<evidence type="ECO:0000255" key="1">
    <source>
        <dbReference type="HAMAP-Rule" id="MF_01569"/>
    </source>
</evidence>
<feature type="chain" id="PRO_0000248645" description="Proline--tRNA ligase 1">
    <location>
        <begin position="1"/>
        <end position="566"/>
    </location>
</feature>
<accession>Q636K7</accession>
<proteinExistence type="inferred from homology"/>
<keyword id="KW-0030">Aminoacyl-tRNA synthetase</keyword>
<keyword id="KW-0067">ATP-binding</keyword>
<keyword id="KW-0963">Cytoplasm</keyword>
<keyword id="KW-0436">Ligase</keyword>
<keyword id="KW-0547">Nucleotide-binding</keyword>
<keyword id="KW-0648">Protein biosynthesis</keyword>
<organism>
    <name type="scientific">Bacillus cereus (strain ZK / E33L)</name>
    <dbReference type="NCBI Taxonomy" id="288681"/>
    <lineage>
        <taxon>Bacteria</taxon>
        <taxon>Bacillati</taxon>
        <taxon>Bacillota</taxon>
        <taxon>Bacilli</taxon>
        <taxon>Bacillales</taxon>
        <taxon>Bacillaceae</taxon>
        <taxon>Bacillus</taxon>
        <taxon>Bacillus cereus group</taxon>
    </lineage>
</organism>
<sequence length="566" mass="63193">MKQSMVFSPTLREVPADAEIKSHQLLLRAGFMRQNASGIYSFLPFGLKVLHKVERIVREEMERAGAVELLMPAMQAAELWQESGRWYSYGSELMRMKDRNAREFALGATHEEVITDLVRDEVKSYKKLPLTLYQIQTKFRDEQRPRFGLLRGREFLMKDAYSFHATQESLDEVYDRLYKAYSNIFARCGLNFRAVIADSGAMGGKDTHEFMVLSDVGEDTIAYSDTSDYAANIEMAPVVATYTKSDEAEKELEKVATPDQKAIEEVSAFLNIEADKCIKSMVFKVDEKLVVVLVRGDHEVNDVKVKNVYGASVVELASHEEVKELLNCEVGSLGPIGVNGDIEIIADHAVASIVNGCSGANEEGFHYVNVNPERDFKVSQYTDLRFIQEGDQSPDGNGTILFARGIEVGHVFKLGTRYSEAMNATFLDENGKTQPLIMGCYGIGVSRTVAAIAEQFNDENGLVWPKAVAPFHVHVIPVNMKSDAQREMGENIYNSLQEQGYEVLLDDRAERAGVKFADADLFGLPVRVTVGKKADEGIVEVKVRATGESEEIKVEELQTYIANILK</sequence>
<gene>
    <name evidence="1" type="primary">proS1</name>
    <name type="ordered locus">BCE33L3578</name>
</gene>
<protein>
    <recommendedName>
        <fullName evidence="1">Proline--tRNA ligase 1</fullName>
        <ecNumber evidence="1">6.1.1.15</ecNumber>
    </recommendedName>
    <alternativeName>
        <fullName evidence="1">Prolyl-tRNA synthetase 1</fullName>
        <shortName evidence="1">ProRS 1</shortName>
    </alternativeName>
</protein>
<name>SYP1_BACCZ</name>
<comment type="function">
    <text evidence="1">Catalyzes the attachment of proline to tRNA(Pro) in a two-step reaction: proline is first activated by ATP to form Pro-AMP and then transferred to the acceptor end of tRNA(Pro). As ProRS can inadvertently accommodate and process non-cognate amino acids such as alanine and cysteine, to avoid such errors it has two additional distinct editing activities against alanine. One activity is designated as 'pretransfer' editing and involves the tRNA(Pro)-independent hydrolysis of activated Ala-AMP. The other activity is designated 'posttransfer' editing and involves deacylation of mischarged Ala-tRNA(Pro). The misacylated Cys-tRNA(Pro) is not edited by ProRS.</text>
</comment>
<comment type="catalytic activity">
    <reaction evidence="1">
        <text>tRNA(Pro) + L-proline + ATP = L-prolyl-tRNA(Pro) + AMP + diphosphate</text>
        <dbReference type="Rhea" id="RHEA:14305"/>
        <dbReference type="Rhea" id="RHEA-COMP:9700"/>
        <dbReference type="Rhea" id="RHEA-COMP:9702"/>
        <dbReference type="ChEBI" id="CHEBI:30616"/>
        <dbReference type="ChEBI" id="CHEBI:33019"/>
        <dbReference type="ChEBI" id="CHEBI:60039"/>
        <dbReference type="ChEBI" id="CHEBI:78442"/>
        <dbReference type="ChEBI" id="CHEBI:78532"/>
        <dbReference type="ChEBI" id="CHEBI:456215"/>
        <dbReference type="EC" id="6.1.1.15"/>
    </reaction>
</comment>
<comment type="subunit">
    <text evidence="1">Homodimer.</text>
</comment>
<comment type="subcellular location">
    <subcellularLocation>
        <location evidence="1">Cytoplasm</location>
    </subcellularLocation>
</comment>
<comment type="domain">
    <text evidence="1">Consists of three domains: the N-terminal catalytic domain, the editing domain and the C-terminal anticodon-binding domain.</text>
</comment>
<comment type="similarity">
    <text evidence="1">Belongs to the class-II aminoacyl-tRNA synthetase family. ProS type 1 subfamily.</text>
</comment>
<reference key="1">
    <citation type="journal article" date="2006" name="J. Bacteriol.">
        <title>Pathogenomic sequence analysis of Bacillus cereus and Bacillus thuringiensis isolates closely related to Bacillus anthracis.</title>
        <authorList>
            <person name="Han C.S."/>
            <person name="Xie G."/>
            <person name="Challacombe J.F."/>
            <person name="Altherr M.R."/>
            <person name="Bhotika S.S."/>
            <person name="Bruce D."/>
            <person name="Campbell C.S."/>
            <person name="Campbell M.L."/>
            <person name="Chen J."/>
            <person name="Chertkov O."/>
            <person name="Cleland C."/>
            <person name="Dimitrijevic M."/>
            <person name="Doggett N.A."/>
            <person name="Fawcett J.J."/>
            <person name="Glavina T."/>
            <person name="Goodwin L.A."/>
            <person name="Hill K.K."/>
            <person name="Hitchcock P."/>
            <person name="Jackson P.J."/>
            <person name="Keim P."/>
            <person name="Kewalramani A.R."/>
            <person name="Longmire J."/>
            <person name="Lucas S."/>
            <person name="Malfatti S."/>
            <person name="McMurry K."/>
            <person name="Meincke L.J."/>
            <person name="Misra M."/>
            <person name="Moseman B.L."/>
            <person name="Mundt M."/>
            <person name="Munk A.C."/>
            <person name="Okinaka R.T."/>
            <person name="Parson-Quintana B."/>
            <person name="Reilly L.P."/>
            <person name="Richardson P."/>
            <person name="Robinson D.L."/>
            <person name="Rubin E."/>
            <person name="Saunders E."/>
            <person name="Tapia R."/>
            <person name="Tesmer J.G."/>
            <person name="Thayer N."/>
            <person name="Thompson L.S."/>
            <person name="Tice H."/>
            <person name="Ticknor L.O."/>
            <person name="Wills P.L."/>
            <person name="Brettin T.S."/>
            <person name="Gilna P."/>
        </authorList>
    </citation>
    <scope>NUCLEOTIDE SEQUENCE [LARGE SCALE GENOMIC DNA]</scope>
    <source>
        <strain>ZK / E33L</strain>
    </source>
</reference>
<dbReference type="EC" id="6.1.1.15" evidence="1"/>
<dbReference type="EMBL" id="CP000001">
    <property type="protein sequence ID" value="AAU16688.1"/>
    <property type="molecule type" value="Genomic_DNA"/>
</dbReference>
<dbReference type="RefSeq" id="WP_000814311.1">
    <property type="nucleotide sequence ID" value="NC_006274.1"/>
</dbReference>
<dbReference type="SMR" id="Q636K7"/>
<dbReference type="KEGG" id="bcz:BCE33L3578"/>
<dbReference type="PATRIC" id="fig|288681.22.peg.1833"/>
<dbReference type="Proteomes" id="UP000002612">
    <property type="component" value="Chromosome"/>
</dbReference>
<dbReference type="GO" id="GO:0005829">
    <property type="term" value="C:cytosol"/>
    <property type="evidence" value="ECO:0007669"/>
    <property type="project" value="TreeGrafter"/>
</dbReference>
<dbReference type="GO" id="GO:0002161">
    <property type="term" value="F:aminoacyl-tRNA deacylase activity"/>
    <property type="evidence" value="ECO:0007669"/>
    <property type="project" value="InterPro"/>
</dbReference>
<dbReference type="GO" id="GO:0005524">
    <property type="term" value="F:ATP binding"/>
    <property type="evidence" value="ECO:0007669"/>
    <property type="project" value="UniProtKB-UniRule"/>
</dbReference>
<dbReference type="GO" id="GO:0140096">
    <property type="term" value="F:catalytic activity, acting on a protein"/>
    <property type="evidence" value="ECO:0007669"/>
    <property type="project" value="UniProtKB-ARBA"/>
</dbReference>
<dbReference type="GO" id="GO:0004827">
    <property type="term" value="F:proline-tRNA ligase activity"/>
    <property type="evidence" value="ECO:0007669"/>
    <property type="project" value="UniProtKB-UniRule"/>
</dbReference>
<dbReference type="GO" id="GO:0016740">
    <property type="term" value="F:transferase activity"/>
    <property type="evidence" value="ECO:0007669"/>
    <property type="project" value="UniProtKB-ARBA"/>
</dbReference>
<dbReference type="GO" id="GO:0006433">
    <property type="term" value="P:prolyl-tRNA aminoacylation"/>
    <property type="evidence" value="ECO:0007669"/>
    <property type="project" value="UniProtKB-UniRule"/>
</dbReference>
<dbReference type="CDD" id="cd04334">
    <property type="entry name" value="ProRS-INS"/>
    <property type="match status" value="1"/>
</dbReference>
<dbReference type="CDD" id="cd00861">
    <property type="entry name" value="ProRS_anticodon_short"/>
    <property type="match status" value="1"/>
</dbReference>
<dbReference type="CDD" id="cd00779">
    <property type="entry name" value="ProRS_core_prok"/>
    <property type="match status" value="1"/>
</dbReference>
<dbReference type="FunFam" id="3.30.930.10:FF:000043">
    <property type="entry name" value="Proline--tRNA ligase"/>
    <property type="match status" value="1"/>
</dbReference>
<dbReference type="FunFam" id="3.30.930.10:FF:000065">
    <property type="entry name" value="Proline--tRNA ligase"/>
    <property type="match status" value="1"/>
</dbReference>
<dbReference type="FunFam" id="3.40.50.800:FF:000011">
    <property type="entry name" value="Proline--tRNA ligase"/>
    <property type="match status" value="1"/>
</dbReference>
<dbReference type="Gene3D" id="3.40.50.800">
    <property type="entry name" value="Anticodon-binding domain"/>
    <property type="match status" value="1"/>
</dbReference>
<dbReference type="Gene3D" id="3.30.930.10">
    <property type="entry name" value="Bira Bifunctional Protein, Domain 2"/>
    <property type="match status" value="2"/>
</dbReference>
<dbReference type="HAMAP" id="MF_01569">
    <property type="entry name" value="Pro_tRNA_synth_type1"/>
    <property type="match status" value="1"/>
</dbReference>
<dbReference type="InterPro" id="IPR002314">
    <property type="entry name" value="aa-tRNA-synt_IIb"/>
</dbReference>
<dbReference type="InterPro" id="IPR006195">
    <property type="entry name" value="aa-tRNA-synth_II"/>
</dbReference>
<dbReference type="InterPro" id="IPR045864">
    <property type="entry name" value="aa-tRNA-synth_II/BPL/LPL"/>
</dbReference>
<dbReference type="InterPro" id="IPR004154">
    <property type="entry name" value="Anticodon-bd"/>
</dbReference>
<dbReference type="InterPro" id="IPR036621">
    <property type="entry name" value="Anticodon-bd_dom_sf"/>
</dbReference>
<dbReference type="InterPro" id="IPR002316">
    <property type="entry name" value="Pro-tRNA-ligase_IIa"/>
</dbReference>
<dbReference type="InterPro" id="IPR004500">
    <property type="entry name" value="Pro-tRNA-synth_IIa_bac-type"/>
</dbReference>
<dbReference type="InterPro" id="IPR023717">
    <property type="entry name" value="Pro-tRNA-Synthase_IIa_type1"/>
</dbReference>
<dbReference type="InterPro" id="IPR050062">
    <property type="entry name" value="Pro-tRNA_synthetase"/>
</dbReference>
<dbReference type="InterPro" id="IPR044140">
    <property type="entry name" value="ProRS_anticodon_short"/>
</dbReference>
<dbReference type="InterPro" id="IPR033730">
    <property type="entry name" value="ProRS_core_prok"/>
</dbReference>
<dbReference type="InterPro" id="IPR036754">
    <property type="entry name" value="YbaK/aa-tRNA-synt-asso_dom_sf"/>
</dbReference>
<dbReference type="InterPro" id="IPR007214">
    <property type="entry name" value="YbaK/aa-tRNA-synth-assoc-dom"/>
</dbReference>
<dbReference type="NCBIfam" id="NF006625">
    <property type="entry name" value="PRK09194.1"/>
    <property type="match status" value="1"/>
</dbReference>
<dbReference type="NCBIfam" id="TIGR00409">
    <property type="entry name" value="proS_fam_II"/>
    <property type="match status" value="1"/>
</dbReference>
<dbReference type="PANTHER" id="PTHR42753">
    <property type="entry name" value="MITOCHONDRIAL RIBOSOME PROTEIN L39/PROLYL-TRNA LIGASE FAMILY MEMBER"/>
    <property type="match status" value="1"/>
</dbReference>
<dbReference type="PANTHER" id="PTHR42753:SF2">
    <property type="entry name" value="PROLINE--TRNA LIGASE"/>
    <property type="match status" value="1"/>
</dbReference>
<dbReference type="Pfam" id="PF03129">
    <property type="entry name" value="HGTP_anticodon"/>
    <property type="match status" value="1"/>
</dbReference>
<dbReference type="Pfam" id="PF00587">
    <property type="entry name" value="tRNA-synt_2b"/>
    <property type="match status" value="1"/>
</dbReference>
<dbReference type="Pfam" id="PF04073">
    <property type="entry name" value="tRNA_edit"/>
    <property type="match status" value="1"/>
</dbReference>
<dbReference type="PIRSF" id="PIRSF001535">
    <property type="entry name" value="ProRS_1"/>
    <property type="match status" value="1"/>
</dbReference>
<dbReference type="PRINTS" id="PR01046">
    <property type="entry name" value="TRNASYNTHPRO"/>
</dbReference>
<dbReference type="SUPFAM" id="SSF52954">
    <property type="entry name" value="Class II aaRS ABD-related"/>
    <property type="match status" value="1"/>
</dbReference>
<dbReference type="SUPFAM" id="SSF55681">
    <property type="entry name" value="Class II aaRS and biotin synthetases"/>
    <property type="match status" value="1"/>
</dbReference>
<dbReference type="SUPFAM" id="SSF55826">
    <property type="entry name" value="YbaK/ProRS associated domain"/>
    <property type="match status" value="1"/>
</dbReference>
<dbReference type="PROSITE" id="PS50862">
    <property type="entry name" value="AA_TRNA_LIGASE_II"/>
    <property type="match status" value="1"/>
</dbReference>